<reference key="1">
    <citation type="journal article" date="2005" name="Nucleic Acids Res.">
        <title>The genome sequence of Salmonella enterica serovar Choleraesuis, a highly invasive and resistant zoonotic pathogen.</title>
        <authorList>
            <person name="Chiu C.-H."/>
            <person name="Tang P."/>
            <person name="Chu C."/>
            <person name="Hu S."/>
            <person name="Bao Q."/>
            <person name="Yu J."/>
            <person name="Chou Y.-Y."/>
            <person name="Wang H.-S."/>
            <person name="Lee Y.-S."/>
        </authorList>
    </citation>
    <scope>NUCLEOTIDE SEQUENCE [LARGE SCALE GENOMIC DNA]</scope>
    <source>
        <strain>SC-B67</strain>
    </source>
</reference>
<accession>Q57JA2</accession>
<sequence>MSLFPVIVVFGLSFPPIFFELLLSLAIFWLVRRMLVPTGIYDFVWHPALFNTALYCCLFYLISRLFV</sequence>
<organism>
    <name type="scientific">Salmonella choleraesuis (strain SC-B67)</name>
    <dbReference type="NCBI Taxonomy" id="321314"/>
    <lineage>
        <taxon>Bacteria</taxon>
        <taxon>Pseudomonadati</taxon>
        <taxon>Pseudomonadota</taxon>
        <taxon>Gammaproteobacteria</taxon>
        <taxon>Enterobacterales</taxon>
        <taxon>Enterobacteriaceae</taxon>
        <taxon>Salmonella</taxon>
    </lineage>
</organism>
<protein>
    <recommendedName>
        <fullName evidence="1">Protein AaeX</fullName>
    </recommendedName>
</protein>
<dbReference type="EMBL" id="AE017220">
    <property type="protein sequence ID" value="AAX67210.1"/>
    <property type="molecule type" value="Genomic_DNA"/>
</dbReference>
<dbReference type="RefSeq" id="WP_000051840.1">
    <property type="nucleotide sequence ID" value="NC_006905.1"/>
</dbReference>
<dbReference type="SMR" id="Q57JA2"/>
<dbReference type="GeneID" id="45138179"/>
<dbReference type="KEGG" id="sec:SCH_3304"/>
<dbReference type="HOGENOM" id="CLU_188292_0_0_6"/>
<dbReference type="Proteomes" id="UP000000538">
    <property type="component" value="Chromosome"/>
</dbReference>
<dbReference type="GO" id="GO:0005886">
    <property type="term" value="C:plasma membrane"/>
    <property type="evidence" value="ECO:0007669"/>
    <property type="project" value="UniProtKB-SubCell"/>
</dbReference>
<dbReference type="HAMAP" id="MF_01546">
    <property type="entry name" value="AaeX"/>
    <property type="match status" value="1"/>
</dbReference>
<dbReference type="InterPro" id="IPR012451">
    <property type="entry name" value="DUF1656"/>
</dbReference>
<dbReference type="NCBIfam" id="NF008615">
    <property type="entry name" value="PRK11594.1"/>
    <property type="match status" value="1"/>
</dbReference>
<dbReference type="Pfam" id="PF07869">
    <property type="entry name" value="DUF1656"/>
    <property type="match status" value="1"/>
</dbReference>
<feature type="chain" id="PRO_0000215051" description="Protein AaeX">
    <location>
        <begin position="1"/>
        <end position="67"/>
    </location>
</feature>
<feature type="transmembrane region" description="Helical" evidence="1">
    <location>
        <begin position="3"/>
        <end position="23"/>
    </location>
</feature>
<feature type="transmembrane region" description="Helical" evidence="1">
    <location>
        <begin position="43"/>
        <end position="63"/>
    </location>
</feature>
<comment type="subcellular location">
    <subcellularLocation>
        <location evidence="1">Cell membrane</location>
        <topology evidence="1">Multi-pass membrane protein</topology>
    </subcellularLocation>
</comment>
<comment type="similarity">
    <text evidence="1">Belongs to the AaeX family.</text>
</comment>
<name>AAEX_SALCH</name>
<evidence type="ECO:0000255" key="1">
    <source>
        <dbReference type="HAMAP-Rule" id="MF_01546"/>
    </source>
</evidence>
<gene>
    <name evidence="1" type="primary">aaeX</name>
    <name type="ordered locus">SCH_3304</name>
</gene>
<keyword id="KW-1003">Cell membrane</keyword>
<keyword id="KW-0472">Membrane</keyword>
<keyword id="KW-0812">Transmembrane</keyword>
<keyword id="KW-1133">Transmembrane helix</keyword>
<proteinExistence type="inferred from homology"/>